<evidence type="ECO:0000255" key="1">
    <source>
        <dbReference type="HAMAP-Rule" id="MF_00445"/>
    </source>
</evidence>
<evidence type="ECO:0000305" key="2"/>
<protein>
    <recommendedName>
        <fullName evidence="1">NADH-quinone oxidoreductase subunit N</fullName>
        <ecNumber evidence="1">7.1.1.-</ecNumber>
    </recommendedName>
    <alternativeName>
        <fullName evidence="1">NADH dehydrogenase I subunit N</fullName>
    </alternativeName>
    <alternativeName>
        <fullName evidence="1">NDH-1 subunit N</fullName>
    </alternativeName>
</protein>
<dbReference type="EC" id="7.1.1.-" evidence="1"/>
<dbReference type="EMBL" id="AE005674">
    <property type="protein sequence ID" value="AAN43865.2"/>
    <property type="status" value="ALT_INIT"/>
    <property type="molecule type" value="Genomic_DNA"/>
</dbReference>
<dbReference type="EMBL" id="AE014073">
    <property type="protein sequence ID" value="AAP17683.1"/>
    <property type="status" value="ALT_INIT"/>
    <property type="molecule type" value="Genomic_DNA"/>
</dbReference>
<dbReference type="RefSeq" id="NP_708158.4">
    <property type="nucleotide sequence ID" value="NC_004337.2"/>
</dbReference>
<dbReference type="RefSeq" id="WP_000156718.1">
    <property type="nucleotide sequence ID" value="NZ_WPGW01000084.1"/>
</dbReference>
<dbReference type="SMR" id="Q83QT2"/>
<dbReference type="STRING" id="198214.SF2352"/>
<dbReference type="PaxDb" id="198214-SF2352"/>
<dbReference type="GeneID" id="1027239"/>
<dbReference type="KEGG" id="sfl:SF2352"/>
<dbReference type="KEGG" id="sfx:S2487"/>
<dbReference type="PATRIC" id="fig|198214.7.peg.2818"/>
<dbReference type="HOGENOM" id="CLU_007100_1_5_6"/>
<dbReference type="Proteomes" id="UP000001006">
    <property type="component" value="Chromosome"/>
</dbReference>
<dbReference type="Proteomes" id="UP000002673">
    <property type="component" value="Chromosome"/>
</dbReference>
<dbReference type="GO" id="GO:0005886">
    <property type="term" value="C:plasma membrane"/>
    <property type="evidence" value="ECO:0007669"/>
    <property type="project" value="UniProtKB-SubCell"/>
</dbReference>
<dbReference type="GO" id="GO:0008137">
    <property type="term" value="F:NADH dehydrogenase (ubiquinone) activity"/>
    <property type="evidence" value="ECO:0007669"/>
    <property type="project" value="InterPro"/>
</dbReference>
<dbReference type="GO" id="GO:0050136">
    <property type="term" value="F:NADH:ubiquinone reductase (non-electrogenic) activity"/>
    <property type="evidence" value="ECO:0007669"/>
    <property type="project" value="UniProtKB-UniRule"/>
</dbReference>
<dbReference type="GO" id="GO:0048038">
    <property type="term" value="F:quinone binding"/>
    <property type="evidence" value="ECO:0007669"/>
    <property type="project" value="UniProtKB-KW"/>
</dbReference>
<dbReference type="GO" id="GO:0042773">
    <property type="term" value="P:ATP synthesis coupled electron transport"/>
    <property type="evidence" value="ECO:0007669"/>
    <property type="project" value="InterPro"/>
</dbReference>
<dbReference type="HAMAP" id="MF_00445">
    <property type="entry name" value="NDH1_NuoN_1"/>
    <property type="match status" value="1"/>
</dbReference>
<dbReference type="InterPro" id="IPR010096">
    <property type="entry name" value="NADH-Q_OxRdtase_suN/2"/>
</dbReference>
<dbReference type="InterPro" id="IPR001750">
    <property type="entry name" value="ND/Mrp_TM"/>
</dbReference>
<dbReference type="NCBIfam" id="TIGR01770">
    <property type="entry name" value="NDH_I_N"/>
    <property type="match status" value="1"/>
</dbReference>
<dbReference type="NCBIfam" id="NF004439">
    <property type="entry name" value="PRK05777.1-1"/>
    <property type="match status" value="1"/>
</dbReference>
<dbReference type="PANTHER" id="PTHR22773">
    <property type="entry name" value="NADH DEHYDROGENASE"/>
    <property type="match status" value="1"/>
</dbReference>
<dbReference type="Pfam" id="PF00361">
    <property type="entry name" value="Proton_antipo_M"/>
    <property type="match status" value="1"/>
</dbReference>
<accession>Q83QT2</accession>
<accession>Q7UC57</accession>
<gene>
    <name evidence="1" type="primary">nuoN</name>
    <name type="ordered locus">SF2352</name>
    <name type="ordered locus">S2487</name>
</gene>
<reference key="1">
    <citation type="journal article" date="2002" name="Nucleic Acids Res.">
        <title>Genome sequence of Shigella flexneri 2a: insights into pathogenicity through comparison with genomes of Escherichia coli K12 and O157.</title>
        <authorList>
            <person name="Jin Q."/>
            <person name="Yuan Z."/>
            <person name="Xu J."/>
            <person name="Wang Y."/>
            <person name="Shen Y."/>
            <person name="Lu W."/>
            <person name="Wang J."/>
            <person name="Liu H."/>
            <person name="Yang J."/>
            <person name="Yang F."/>
            <person name="Zhang X."/>
            <person name="Zhang J."/>
            <person name="Yang G."/>
            <person name="Wu H."/>
            <person name="Qu D."/>
            <person name="Dong J."/>
            <person name="Sun L."/>
            <person name="Xue Y."/>
            <person name="Zhao A."/>
            <person name="Gao Y."/>
            <person name="Zhu J."/>
            <person name="Kan B."/>
            <person name="Ding K."/>
            <person name="Chen S."/>
            <person name="Cheng H."/>
            <person name="Yao Z."/>
            <person name="He B."/>
            <person name="Chen R."/>
            <person name="Ma D."/>
            <person name="Qiang B."/>
            <person name="Wen Y."/>
            <person name="Hou Y."/>
            <person name="Yu J."/>
        </authorList>
    </citation>
    <scope>NUCLEOTIDE SEQUENCE [LARGE SCALE GENOMIC DNA]</scope>
    <source>
        <strain>301 / Serotype 2a</strain>
    </source>
</reference>
<reference key="2">
    <citation type="journal article" date="2003" name="Infect. Immun.">
        <title>Complete genome sequence and comparative genomics of Shigella flexneri serotype 2a strain 2457T.</title>
        <authorList>
            <person name="Wei J."/>
            <person name="Goldberg M.B."/>
            <person name="Burland V."/>
            <person name="Venkatesan M.M."/>
            <person name="Deng W."/>
            <person name="Fournier G."/>
            <person name="Mayhew G.F."/>
            <person name="Plunkett G. III"/>
            <person name="Rose D.J."/>
            <person name="Darling A."/>
            <person name="Mau B."/>
            <person name="Perna N.T."/>
            <person name="Payne S.M."/>
            <person name="Runyen-Janecky L.J."/>
            <person name="Zhou S."/>
            <person name="Schwartz D.C."/>
            <person name="Blattner F.R."/>
        </authorList>
    </citation>
    <scope>NUCLEOTIDE SEQUENCE [LARGE SCALE GENOMIC DNA]</scope>
    <source>
        <strain>ATCC 700930 / 2457T / Serotype 2a</strain>
    </source>
</reference>
<proteinExistence type="inferred from homology"/>
<sequence>MTITPQNLIALLPLLIVGLTVVVVMLSIAWRRNHFLNATLSVIGLNAALVSLWFVGQAGAMDVTPLMRVDGFAMLYTGLVLLASLATCTFAYPWLEGYNDNKDEFYLLVLIAALGGILLANANHLASLFLGIELISLPLFGLVGYAFRQKRSLEASIKYTILSAAASSFLLFGMALVYAQSGDLSFVALGKNLGDGMLNEPLLLAGFGMMIVGLGFKLSLVPFHLWTPDVYQGAPAPVSTFLATASKIAIFGVVMRLFLYAPVGDSEAIRVVLAIIAFASIIFGNLMALSQTNIKRLLGYSSISHLGYLLVALIALQTGEMSMEAVGVYLAGYLFSSLGAFGVVSLMSSPYRGPDADSLFSYRGLFWHRPILAAVMTVMMLSLAGIPMTLGFIGKFYVLAVGVQAHLWWLVGAVVVGSAIGLYYYLRVAVSLYLHAPEQPGRDAPSNWQYSAGGIVVLISALLVLVLGVWPQPLISIVRLAMPLM</sequence>
<keyword id="KW-0997">Cell inner membrane</keyword>
<keyword id="KW-1003">Cell membrane</keyword>
<keyword id="KW-0472">Membrane</keyword>
<keyword id="KW-0520">NAD</keyword>
<keyword id="KW-0874">Quinone</keyword>
<keyword id="KW-1185">Reference proteome</keyword>
<keyword id="KW-1278">Translocase</keyword>
<keyword id="KW-0812">Transmembrane</keyword>
<keyword id="KW-1133">Transmembrane helix</keyword>
<keyword id="KW-0813">Transport</keyword>
<keyword id="KW-0830">Ubiquinone</keyword>
<organism>
    <name type="scientific">Shigella flexneri</name>
    <dbReference type="NCBI Taxonomy" id="623"/>
    <lineage>
        <taxon>Bacteria</taxon>
        <taxon>Pseudomonadati</taxon>
        <taxon>Pseudomonadota</taxon>
        <taxon>Gammaproteobacteria</taxon>
        <taxon>Enterobacterales</taxon>
        <taxon>Enterobacteriaceae</taxon>
        <taxon>Shigella</taxon>
    </lineage>
</organism>
<name>NUON_SHIFL</name>
<feature type="chain" id="PRO_0000249451" description="NADH-quinone oxidoreductase subunit N">
    <location>
        <begin position="1"/>
        <end position="485"/>
    </location>
</feature>
<feature type="transmembrane region" description="Helical" evidence="1">
    <location>
        <begin position="8"/>
        <end position="28"/>
    </location>
</feature>
<feature type="transmembrane region" description="Helical" evidence="1">
    <location>
        <begin position="35"/>
        <end position="55"/>
    </location>
</feature>
<feature type="transmembrane region" description="Helical" evidence="1">
    <location>
        <begin position="71"/>
        <end position="91"/>
    </location>
</feature>
<feature type="transmembrane region" description="Helical" evidence="1">
    <location>
        <begin position="105"/>
        <end position="125"/>
    </location>
</feature>
<feature type="transmembrane region" description="Helical" evidence="1">
    <location>
        <begin position="127"/>
        <end position="147"/>
    </location>
</feature>
<feature type="transmembrane region" description="Helical" evidence="1">
    <location>
        <begin position="159"/>
        <end position="179"/>
    </location>
</feature>
<feature type="transmembrane region" description="Helical" evidence="1">
    <location>
        <begin position="203"/>
        <end position="223"/>
    </location>
</feature>
<feature type="transmembrane region" description="Helical" evidence="1">
    <location>
        <begin position="235"/>
        <end position="255"/>
    </location>
</feature>
<feature type="transmembrane region" description="Helical" evidence="1">
    <location>
        <begin position="271"/>
        <end position="291"/>
    </location>
</feature>
<feature type="transmembrane region" description="Helical" evidence="1">
    <location>
        <begin position="297"/>
        <end position="317"/>
    </location>
</feature>
<feature type="transmembrane region" description="Helical" evidence="1">
    <location>
        <begin position="326"/>
        <end position="346"/>
    </location>
</feature>
<feature type="transmembrane region" description="Helical" evidence="1">
    <location>
        <begin position="373"/>
        <end position="393"/>
    </location>
</feature>
<feature type="transmembrane region" description="Helical" evidence="1">
    <location>
        <begin position="408"/>
        <end position="430"/>
    </location>
</feature>
<feature type="transmembrane region" description="Helical" evidence="1">
    <location>
        <begin position="455"/>
        <end position="475"/>
    </location>
</feature>
<comment type="function">
    <text evidence="1">NDH-1 shuttles electrons from NADH, via FMN and iron-sulfur (Fe-S) centers, to quinones in the respiratory chain. The immediate electron acceptor for the enzyme in this species is believed to be ubiquinone. Couples the redox reaction to proton translocation (for every two electrons transferred, four hydrogen ions are translocated across the cytoplasmic membrane), and thus conserves the redox energy in a proton gradient.</text>
</comment>
<comment type="catalytic activity">
    <reaction evidence="1">
        <text>a quinone + NADH + 5 H(+)(in) = a quinol + NAD(+) + 4 H(+)(out)</text>
        <dbReference type="Rhea" id="RHEA:57888"/>
        <dbReference type="ChEBI" id="CHEBI:15378"/>
        <dbReference type="ChEBI" id="CHEBI:24646"/>
        <dbReference type="ChEBI" id="CHEBI:57540"/>
        <dbReference type="ChEBI" id="CHEBI:57945"/>
        <dbReference type="ChEBI" id="CHEBI:132124"/>
    </reaction>
</comment>
<comment type="subunit">
    <text evidence="1">NDH-1 is composed of 13 different subunits. Subunits NuoA, H, J, K, L, M, N constitute the membrane sector of the complex.</text>
</comment>
<comment type="subcellular location">
    <subcellularLocation>
        <location evidence="1">Cell inner membrane</location>
        <topology evidence="1">Multi-pass membrane protein</topology>
    </subcellularLocation>
</comment>
<comment type="similarity">
    <text evidence="1">Belongs to the complex I subunit 2 family.</text>
</comment>
<comment type="sequence caution" evidence="2">
    <conflict type="erroneous initiation">
        <sequence resource="EMBL-CDS" id="AAN43865"/>
    </conflict>
</comment>
<comment type="sequence caution" evidence="2">
    <conflict type="erroneous initiation">
        <sequence resource="EMBL-CDS" id="AAP17683"/>
    </conflict>
</comment>